<comment type="function">
    <text evidence="1 2 3 4 6">Part of the Mon1-Ccz1 guanyl-nucleotide exchange factor complex specific for Rab7 that promotes the exchange of GDP to GTP, converting Rab7 from an inactive GDP-bound form into an active GTP-bound form (PubMed:23418349, PubMed:32499409). Required for recruitment of Rab7 to endosomal and autophagosomal membranes to mediate endolysosomal and autolysosomal vesicle maturation (PubMed:23418349, PubMed:27559127, PubMed:37463208). Required for fusion of multivesicular bodies and lysosomes but not their formation or trafficking (PubMed:23418349). Involved in the replacement of Rab5 (and possibly Rab4) with Rab7, also known as Rab conversion or the Rab cascade, during endosomal maturation (PubMed:23418349). The Mon1-Ccz1 complex is recruited to phosphatidylinositol 3-phosphate (PtdIns[3]P) enriched membranes by Rab5, which stimulates recruitment and guanyl-nucleotide exchange of Rab7 (PubMed:32391792). Together with Rab7 required for autolysosome formation in fat cells and autophagic degradation during starvation-induced basal and developmental autophagy (PubMed:27559127).</text>
</comment>
<comment type="activity regulation">
    <text evidence="3 6">The Rab7 guanyl-nucleotide exchange factor (GEF) activity of the Mon1-Ccz1 complex is autoinhibited by the N-terminal disordered region of Mon1 (PubMed:37463208). GEF activity is stimulated by Rab5-mediated recruitment to membranes (PubMed:32391792).</text>
</comment>
<comment type="subunit">
    <text evidence="2 4 5 6">Component of the Mon1-Ccz1 guanyl-nucleotide exchange factor complex made up of Mon1, Ccz1 and Bulli; the interaction of Bulli with the Mon1-Ccz1 heterodimer is mediated via the C-terminal Mic1 domain of Bulli (PubMed:27559127, PubMed:32499409, PubMed:37155863, PubMed:37463208). Mon1 and Ccz1 form a stable complex which displays Rab7 GEF activity with or without Bulli; GEF activity is enhanced by Bulli possibly by improving membrane association of the complex (PubMed:32499409, PubMed:37155863). Interacts with Rab5 and Rab7; preferentially binds GTP-bound Rab5 and GDP-bound Rab7 (PubMed:27559127).</text>
</comment>
<comment type="subcellular location">
    <subcellularLocation>
        <location evidence="1">Cytoplasm</location>
        <location evidence="1">Cytosol</location>
    </subcellularLocation>
    <text evidence="9">There is no evidence of association with endosomal membranes, however this association may be transient.</text>
</comment>
<comment type="disruption phenotype">
    <text evidence="2">Accumulation of autophagosomes and reduced number of autolysosomes in fat cells caused by disruption of Rab7 recruitment to autophagosomes leading to a defect in autophagosome-autolysosome fusion (PubMed:27559127). Impaired lysosomal degradation of endocytosed Notch and Boss receptors in the developing eye leading to their accumulation in the brain (PubMed:27559127).</text>
</comment>
<comment type="similarity">
    <text evidence="8">Belongs to the CCZ1 family.</text>
</comment>
<organism evidence="14">
    <name type="scientific">Drosophila melanogaster</name>
    <name type="common">Fruit fly</name>
    <dbReference type="NCBI Taxonomy" id="7227"/>
    <lineage>
        <taxon>Eukaryota</taxon>
        <taxon>Metazoa</taxon>
        <taxon>Ecdysozoa</taxon>
        <taxon>Arthropoda</taxon>
        <taxon>Hexapoda</taxon>
        <taxon>Insecta</taxon>
        <taxon>Pterygota</taxon>
        <taxon>Neoptera</taxon>
        <taxon>Endopterygota</taxon>
        <taxon>Diptera</taxon>
        <taxon>Brachycera</taxon>
        <taxon>Muscomorpha</taxon>
        <taxon>Ephydroidea</taxon>
        <taxon>Drosophilidae</taxon>
        <taxon>Drosophila</taxon>
        <taxon>Sophophora</taxon>
    </lineage>
</organism>
<gene>
    <name evidence="12" type="primary">Ccz1</name>
    <name evidence="12" type="ORF">CG14980</name>
</gene>
<keyword id="KW-0002">3D-structure</keyword>
<keyword id="KW-0963">Cytoplasm</keyword>
<keyword id="KW-0344">Guanine-nucleotide releasing factor</keyword>
<keyword id="KW-1185">Reference proteome</keyword>
<keyword id="KW-0813">Transport</keyword>
<evidence type="ECO:0000269" key="1">
    <source>
    </source>
</evidence>
<evidence type="ECO:0000269" key="2">
    <source>
    </source>
</evidence>
<evidence type="ECO:0000269" key="3">
    <source>
    </source>
</evidence>
<evidence type="ECO:0000269" key="4">
    <source>
    </source>
</evidence>
<evidence type="ECO:0000269" key="5">
    <source>
    </source>
</evidence>
<evidence type="ECO:0000269" key="6">
    <source>
    </source>
</evidence>
<evidence type="ECO:0000303" key="7">
    <source>
    </source>
</evidence>
<evidence type="ECO:0000305" key="8"/>
<evidence type="ECO:0000305" key="9">
    <source>
    </source>
</evidence>
<evidence type="ECO:0000312" key="10">
    <source>
        <dbReference type="EMBL" id="AAF47805.3"/>
    </source>
</evidence>
<evidence type="ECO:0000312" key="11">
    <source>
        <dbReference type="EMBL" id="AAL49290.1"/>
    </source>
</evidence>
<evidence type="ECO:0000312" key="12">
    <source>
        <dbReference type="FlyBase" id="FBgn0035470"/>
    </source>
</evidence>
<evidence type="ECO:0000312" key="13">
    <source>
        <dbReference type="PDB" id="8C7G"/>
    </source>
</evidence>
<evidence type="ECO:0000312" key="14">
    <source>
        <dbReference type="Proteomes" id="UP000000803"/>
    </source>
</evidence>
<evidence type="ECO:0007829" key="15">
    <source>
        <dbReference type="PDB" id="8C7G"/>
    </source>
</evidence>
<feature type="chain" id="PRO_0000459503" description="Vacuolar fusion protein CCZ1 homolog">
    <location>
        <begin position="1"/>
        <end position="485"/>
    </location>
</feature>
<feature type="strand" evidence="15">
    <location>
        <begin position="11"/>
        <end position="22"/>
    </location>
</feature>
<feature type="helix" evidence="15">
    <location>
        <begin position="29"/>
        <end position="32"/>
    </location>
</feature>
<feature type="strand" evidence="15">
    <location>
        <begin position="33"/>
        <end position="38"/>
    </location>
</feature>
<feature type="helix" evidence="15">
    <location>
        <begin position="43"/>
        <end position="60"/>
    </location>
</feature>
<feature type="turn" evidence="15">
    <location>
        <begin position="61"/>
        <end position="63"/>
    </location>
</feature>
<feature type="helix" evidence="15">
    <location>
        <begin position="66"/>
        <end position="68"/>
    </location>
</feature>
<feature type="strand" evidence="15">
    <location>
        <begin position="71"/>
        <end position="82"/>
    </location>
</feature>
<feature type="strand" evidence="15">
    <location>
        <begin position="88"/>
        <end position="95"/>
    </location>
</feature>
<feature type="helix" evidence="15">
    <location>
        <begin position="113"/>
        <end position="115"/>
    </location>
</feature>
<feature type="helix" evidence="15">
    <location>
        <begin position="118"/>
        <end position="136"/>
    </location>
</feature>
<feature type="helix" evidence="15">
    <location>
        <begin position="139"/>
        <end position="141"/>
    </location>
</feature>
<feature type="turn" evidence="15">
    <location>
        <begin position="142"/>
        <end position="145"/>
    </location>
</feature>
<feature type="turn" evidence="15">
    <location>
        <begin position="149"/>
        <end position="151"/>
    </location>
</feature>
<feature type="helix" evidence="15">
    <location>
        <begin position="152"/>
        <end position="167"/>
    </location>
</feature>
<feature type="turn" evidence="15">
    <location>
        <begin position="168"/>
        <end position="170"/>
    </location>
</feature>
<feature type="helix" evidence="15">
    <location>
        <begin position="179"/>
        <end position="183"/>
    </location>
</feature>
<feature type="helix" evidence="15">
    <location>
        <begin position="193"/>
        <end position="200"/>
    </location>
</feature>
<feature type="helix" evidence="15">
    <location>
        <begin position="201"/>
        <end position="204"/>
    </location>
</feature>
<feature type="helix" evidence="15">
    <location>
        <begin position="205"/>
        <end position="208"/>
    </location>
</feature>
<feature type="strand" evidence="15">
    <location>
        <begin position="214"/>
        <end position="219"/>
    </location>
</feature>
<feature type="strand" evidence="15">
    <location>
        <begin position="222"/>
        <end position="225"/>
    </location>
</feature>
<feature type="helix" evidence="15">
    <location>
        <begin position="231"/>
        <end position="244"/>
    </location>
</feature>
<feature type="strand" evidence="15">
    <location>
        <begin position="295"/>
        <end position="315"/>
    </location>
</feature>
<feature type="strand" evidence="15">
    <location>
        <begin position="318"/>
        <end position="328"/>
    </location>
</feature>
<feature type="helix" evidence="15">
    <location>
        <begin position="333"/>
        <end position="360"/>
    </location>
</feature>
<feature type="strand" evidence="15">
    <location>
        <begin position="380"/>
        <end position="385"/>
    </location>
</feature>
<feature type="turn" evidence="15">
    <location>
        <begin position="386"/>
        <end position="389"/>
    </location>
</feature>
<feature type="strand" evidence="15">
    <location>
        <begin position="390"/>
        <end position="393"/>
    </location>
</feature>
<feature type="helix" evidence="15">
    <location>
        <begin position="405"/>
        <end position="414"/>
    </location>
</feature>
<feature type="strand" evidence="15">
    <location>
        <begin position="429"/>
        <end position="435"/>
    </location>
</feature>
<feature type="turn" evidence="15">
    <location>
        <begin position="436"/>
        <end position="438"/>
    </location>
</feature>
<feature type="strand" evidence="15">
    <location>
        <begin position="439"/>
        <end position="445"/>
    </location>
</feature>
<feature type="strand" evidence="15">
    <location>
        <begin position="447"/>
        <end position="457"/>
    </location>
</feature>
<feature type="helix" evidence="15">
    <location>
        <begin position="462"/>
        <end position="476"/>
    </location>
</feature>
<dbReference type="EMBL" id="AE014296">
    <property type="protein sequence ID" value="AAF47805.3"/>
    <property type="molecule type" value="Genomic_DNA"/>
</dbReference>
<dbReference type="EMBL" id="AY071668">
    <property type="protein sequence ID" value="AAL49290.1"/>
    <property type="molecule type" value="mRNA"/>
</dbReference>
<dbReference type="RefSeq" id="NP_647835.1">
    <property type="nucleotide sequence ID" value="NM_139578.3"/>
</dbReference>
<dbReference type="PDB" id="8C7G">
    <property type="method" value="EM"/>
    <property type="resolution" value="3.20 A"/>
    <property type="chains" value="B=1-485"/>
</dbReference>
<dbReference type="PDB" id="8JBE">
    <property type="method" value="EM"/>
    <property type="resolution" value="3.25 A"/>
    <property type="chains" value="B=1-485"/>
</dbReference>
<dbReference type="PDBsum" id="8C7G"/>
<dbReference type="PDBsum" id="8JBE"/>
<dbReference type="EMDB" id="EMD-16457"/>
<dbReference type="EMDB" id="EMD-36143"/>
<dbReference type="SMR" id="Q9VZL5"/>
<dbReference type="ComplexPortal" id="CPX-2331">
    <property type="entry name" value="MON1-CCZ1 guanyl-nucleotide exchange factor complex"/>
</dbReference>
<dbReference type="FunCoup" id="Q9VZL5">
    <property type="interactions" value="2642"/>
</dbReference>
<dbReference type="STRING" id="7227.FBpp0073036"/>
<dbReference type="PaxDb" id="7227-FBpp0073036"/>
<dbReference type="DNASU" id="38455"/>
<dbReference type="EnsemblMetazoa" id="FBtr0073180">
    <property type="protein sequence ID" value="FBpp0073036"/>
    <property type="gene ID" value="FBgn0035470"/>
</dbReference>
<dbReference type="GeneID" id="38455"/>
<dbReference type="KEGG" id="dme:Dmel_CG14980"/>
<dbReference type="UCSC" id="CG14980-RB">
    <property type="organism name" value="d. melanogaster"/>
</dbReference>
<dbReference type="AGR" id="FB:FBgn0035470"/>
<dbReference type="CTD" id="51622"/>
<dbReference type="FlyBase" id="FBgn0035470">
    <property type="gene designation" value="Ccz1"/>
</dbReference>
<dbReference type="VEuPathDB" id="VectorBase:FBgn0035470"/>
<dbReference type="eggNOG" id="KOG2622">
    <property type="taxonomic scope" value="Eukaryota"/>
</dbReference>
<dbReference type="GeneTree" id="ENSGT00390000004713"/>
<dbReference type="HOGENOM" id="CLU_037828_2_0_1"/>
<dbReference type="InParanoid" id="Q9VZL5"/>
<dbReference type="OMA" id="DCQALHT"/>
<dbReference type="OrthoDB" id="240546at2759"/>
<dbReference type="Reactome" id="R-DME-8876198">
    <property type="pathway name" value="RAB GEFs exchange GTP for GDP on RABs"/>
</dbReference>
<dbReference type="BioGRID-ORCS" id="38455">
    <property type="hits" value="0 hits in 3 CRISPR screens"/>
</dbReference>
<dbReference type="GenomeRNAi" id="38455"/>
<dbReference type="PRO" id="PR:Q9VZL5"/>
<dbReference type="Proteomes" id="UP000000803">
    <property type="component" value="Chromosome 3L"/>
</dbReference>
<dbReference type="Bgee" id="FBgn0035470">
    <property type="expression patterns" value="Expressed in T neuron T5b (Drosophila) in embryonic/larval optic lobe (Drosophila) and 72 other cell types or tissues"/>
</dbReference>
<dbReference type="GO" id="GO:0005829">
    <property type="term" value="C:cytosol"/>
    <property type="evidence" value="ECO:0000314"/>
    <property type="project" value="FlyBase"/>
</dbReference>
<dbReference type="GO" id="GO:0043231">
    <property type="term" value="C:intracellular membrane-bounded organelle"/>
    <property type="evidence" value="ECO:0000318"/>
    <property type="project" value="GO_Central"/>
</dbReference>
<dbReference type="GO" id="GO:0035658">
    <property type="term" value="C:Mon1-Ccz1 complex"/>
    <property type="evidence" value="ECO:0000353"/>
    <property type="project" value="UniProtKB"/>
</dbReference>
<dbReference type="GO" id="GO:0005085">
    <property type="term" value="F:guanyl-nucleotide exchange factor activity"/>
    <property type="evidence" value="ECO:0007669"/>
    <property type="project" value="UniProtKB-KW"/>
</dbReference>
<dbReference type="GO" id="GO:0006914">
    <property type="term" value="P:autophagy"/>
    <property type="evidence" value="ECO:0000250"/>
    <property type="project" value="FlyBase"/>
</dbReference>
<dbReference type="GO" id="GO:0032510">
    <property type="term" value="P:endosome to lysosome transport via multivesicular body sorting pathway"/>
    <property type="evidence" value="ECO:0000314"/>
    <property type="project" value="FlyBase"/>
</dbReference>
<dbReference type="GO" id="GO:0016192">
    <property type="term" value="P:vesicle-mediated transport"/>
    <property type="evidence" value="ECO:0000318"/>
    <property type="project" value="GO_Central"/>
</dbReference>
<dbReference type="InterPro" id="IPR013176">
    <property type="entry name" value="Ccz1"/>
</dbReference>
<dbReference type="InterPro" id="IPR043987">
    <property type="entry name" value="CCZ1/INTU/HSP4_longin_1"/>
</dbReference>
<dbReference type="InterPro" id="IPR043989">
    <property type="entry name" value="CCZ1/INTU/HSP4_longin_3"/>
</dbReference>
<dbReference type="InterPro" id="IPR043988">
    <property type="entry name" value="CCZ1/INTU_longin_2"/>
</dbReference>
<dbReference type="PANTHER" id="PTHR13056">
    <property type="entry name" value="VACUOLAR FUSION PROTEIN CCZ1 HOMOLOG-RELATED"/>
    <property type="match status" value="1"/>
</dbReference>
<dbReference type="PANTHER" id="PTHR13056:SF0">
    <property type="entry name" value="VACUOLAR FUSION PROTEIN CCZ1 HOMOLOG-RELATED"/>
    <property type="match status" value="1"/>
</dbReference>
<dbReference type="Pfam" id="PF19031">
    <property type="entry name" value="Intu_longin_1"/>
    <property type="match status" value="1"/>
</dbReference>
<dbReference type="Pfam" id="PF19032">
    <property type="entry name" value="Intu_longin_2"/>
    <property type="match status" value="1"/>
</dbReference>
<dbReference type="Pfam" id="PF19033">
    <property type="entry name" value="Intu_longin_3"/>
    <property type="match status" value="1"/>
</dbReference>
<protein>
    <recommendedName>
        <fullName evidence="8">Vacuolar fusion protein CCZ1 homolog</fullName>
    </recommendedName>
    <alternativeName>
        <fullName evidence="10">Caffeine-calcium-zinc sensitivity protein 1</fullName>
        <shortName evidence="7 12">Dccz1</shortName>
    </alternativeName>
</protein>
<name>CCZ1_DROME</name>
<proteinExistence type="evidence at protein level"/>
<reference evidence="14" key="1">
    <citation type="journal article" date="2000" name="Science">
        <title>The genome sequence of Drosophila melanogaster.</title>
        <authorList>
            <person name="Adams M.D."/>
            <person name="Celniker S.E."/>
            <person name="Holt R.A."/>
            <person name="Evans C.A."/>
            <person name="Gocayne J.D."/>
            <person name="Amanatides P.G."/>
            <person name="Scherer S.E."/>
            <person name="Li P.W."/>
            <person name="Hoskins R.A."/>
            <person name="Galle R.F."/>
            <person name="George R.A."/>
            <person name="Lewis S.E."/>
            <person name="Richards S."/>
            <person name="Ashburner M."/>
            <person name="Henderson S.N."/>
            <person name="Sutton G.G."/>
            <person name="Wortman J.R."/>
            <person name="Yandell M.D."/>
            <person name="Zhang Q."/>
            <person name="Chen L.X."/>
            <person name="Brandon R.C."/>
            <person name="Rogers Y.-H.C."/>
            <person name="Blazej R.G."/>
            <person name="Champe M."/>
            <person name="Pfeiffer B.D."/>
            <person name="Wan K.H."/>
            <person name="Doyle C."/>
            <person name="Baxter E.G."/>
            <person name="Helt G."/>
            <person name="Nelson C.R."/>
            <person name="Miklos G.L.G."/>
            <person name="Abril J.F."/>
            <person name="Agbayani A."/>
            <person name="An H.-J."/>
            <person name="Andrews-Pfannkoch C."/>
            <person name="Baldwin D."/>
            <person name="Ballew R.M."/>
            <person name="Basu A."/>
            <person name="Baxendale J."/>
            <person name="Bayraktaroglu L."/>
            <person name="Beasley E.M."/>
            <person name="Beeson K.Y."/>
            <person name="Benos P.V."/>
            <person name="Berman B.P."/>
            <person name="Bhandari D."/>
            <person name="Bolshakov S."/>
            <person name="Borkova D."/>
            <person name="Botchan M.R."/>
            <person name="Bouck J."/>
            <person name="Brokstein P."/>
            <person name="Brottier P."/>
            <person name="Burtis K.C."/>
            <person name="Busam D.A."/>
            <person name="Butler H."/>
            <person name="Cadieu E."/>
            <person name="Center A."/>
            <person name="Chandra I."/>
            <person name="Cherry J.M."/>
            <person name="Cawley S."/>
            <person name="Dahlke C."/>
            <person name="Davenport L.B."/>
            <person name="Davies P."/>
            <person name="de Pablos B."/>
            <person name="Delcher A."/>
            <person name="Deng Z."/>
            <person name="Mays A.D."/>
            <person name="Dew I."/>
            <person name="Dietz S.M."/>
            <person name="Dodson K."/>
            <person name="Doup L.E."/>
            <person name="Downes M."/>
            <person name="Dugan-Rocha S."/>
            <person name="Dunkov B.C."/>
            <person name="Dunn P."/>
            <person name="Durbin K.J."/>
            <person name="Evangelista C.C."/>
            <person name="Ferraz C."/>
            <person name="Ferriera S."/>
            <person name="Fleischmann W."/>
            <person name="Fosler C."/>
            <person name="Gabrielian A.E."/>
            <person name="Garg N.S."/>
            <person name="Gelbart W.M."/>
            <person name="Glasser K."/>
            <person name="Glodek A."/>
            <person name="Gong F."/>
            <person name="Gorrell J.H."/>
            <person name="Gu Z."/>
            <person name="Guan P."/>
            <person name="Harris M."/>
            <person name="Harris N.L."/>
            <person name="Harvey D.A."/>
            <person name="Heiman T.J."/>
            <person name="Hernandez J.R."/>
            <person name="Houck J."/>
            <person name="Hostin D."/>
            <person name="Houston K.A."/>
            <person name="Howland T.J."/>
            <person name="Wei M.-H."/>
            <person name="Ibegwam C."/>
            <person name="Jalali M."/>
            <person name="Kalush F."/>
            <person name="Karpen G.H."/>
            <person name="Ke Z."/>
            <person name="Kennison J.A."/>
            <person name="Ketchum K.A."/>
            <person name="Kimmel B.E."/>
            <person name="Kodira C.D."/>
            <person name="Kraft C.L."/>
            <person name="Kravitz S."/>
            <person name="Kulp D."/>
            <person name="Lai Z."/>
            <person name="Lasko P."/>
            <person name="Lei Y."/>
            <person name="Levitsky A.A."/>
            <person name="Li J.H."/>
            <person name="Li Z."/>
            <person name="Liang Y."/>
            <person name="Lin X."/>
            <person name="Liu X."/>
            <person name="Mattei B."/>
            <person name="McIntosh T.C."/>
            <person name="McLeod M.P."/>
            <person name="McPherson D."/>
            <person name="Merkulov G."/>
            <person name="Milshina N.V."/>
            <person name="Mobarry C."/>
            <person name="Morris J."/>
            <person name="Moshrefi A."/>
            <person name="Mount S.M."/>
            <person name="Moy M."/>
            <person name="Murphy B."/>
            <person name="Murphy L."/>
            <person name="Muzny D.M."/>
            <person name="Nelson D.L."/>
            <person name="Nelson D.R."/>
            <person name="Nelson K.A."/>
            <person name="Nixon K."/>
            <person name="Nusskern D.R."/>
            <person name="Pacleb J.M."/>
            <person name="Palazzolo M."/>
            <person name="Pittman G.S."/>
            <person name="Pan S."/>
            <person name="Pollard J."/>
            <person name="Puri V."/>
            <person name="Reese M.G."/>
            <person name="Reinert K."/>
            <person name="Remington K."/>
            <person name="Saunders R.D.C."/>
            <person name="Scheeler F."/>
            <person name="Shen H."/>
            <person name="Shue B.C."/>
            <person name="Siden-Kiamos I."/>
            <person name="Simpson M."/>
            <person name="Skupski M.P."/>
            <person name="Smith T.J."/>
            <person name="Spier E."/>
            <person name="Spradling A.C."/>
            <person name="Stapleton M."/>
            <person name="Strong R."/>
            <person name="Sun E."/>
            <person name="Svirskas R."/>
            <person name="Tector C."/>
            <person name="Turner R."/>
            <person name="Venter E."/>
            <person name="Wang A.H."/>
            <person name="Wang X."/>
            <person name="Wang Z.-Y."/>
            <person name="Wassarman D.A."/>
            <person name="Weinstock G.M."/>
            <person name="Weissenbach J."/>
            <person name="Williams S.M."/>
            <person name="Woodage T."/>
            <person name="Worley K.C."/>
            <person name="Wu D."/>
            <person name="Yang S."/>
            <person name="Yao Q.A."/>
            <person name="Ye J."/>
            <person name="Yeh R.-F."/>
            <person name="Zaveri J.S."/>
            <person name="Zhan M."/>
            <person name="Zhang G."/>
            <person name="Zhao Q."/>
            <person name="Zheng L."/>
            <person name="Zheng X.H."/>
            <person name="Zhong F.N."/>
            <person name="Zhong W."/>
            <person name="Zhou X."/>
            <person name="Zhu S.C."/>
            <person name="Zhu X."/>
            <person name="Smith H.O."/>
            <person name="Gibbs R.A."/>
            <person name="Myers E.W."/>
            <person name="Rubin G.M."/>
            <person name="Venter J.C."/>
        </authorList>
    </citation>
    <scope>NUCLEOTIDE SEQUENCE [LARGE SCALE GENOMIC DNA]</scope>
    <source>
        <strain evidence="14">Berkeley</strain>
    </source>
</reference>
<reference evidence="14" key="2">
    <citation type="journal article" date="2002" name="Genome Biol.">
        <title>Annotation of the Drosophila melanogaster euchromatic genome: a systematic review.</title>
        <authorList>
            <person name="Misra S."/>
            <person name="Crosby M.A."/>
            <person name="Mungall C.J."/>
            <person name="Matthews B.B."/>
            <person name="Campbell K.S."/>
            <person name="Hradecky P."/>
            <person name="Huang Y."/>
            <person name="Kaminker J.S."/>
            <person name="Millburn G.H."/>
            <person name="Prochnik S.E."/>
            <person name="Smith C.D."/>
            <person name="Tupy J.L."/>
            <person name="Whitfield E.J."/>
            <person name="Bayraktaroglu L."/>
            <person name="Berman B.P."/>
            <person name="Bettencourt B.R."/>
            <person name="Celniker S.E."/>
            <person name="de Grey A.D.N.J."/>
            <person name="Drysdale R.A."/>
            <person name="Harris N.L."/>
            <person name="Richter J."/>
            <person name="Russo S."/>
            <person name="Schroeder A.J."/>
            <person name="Shu S.Q."/>
            <person name="Stapleton M."/>
            <person name="Yamada C."/>
            <person name="Ashburner M."/>
            <person name="Gelbart W.M."/>
            <person name="Rubin G.M."/>
            <person name="Lewis S.E."/>
        </authorList>
    </citation>
    <scope>GENOME REANNOTATION</scope>
    <source>
        <strain evidence="14">Berkeley</strain>
    </source>
</reference>
<reference evidence="11" key="3">
    <citation type="journal article" date="2002" name="Genome Biol.">
        <title>A Drosophila full-length cDNA resource.</title>
        <authorList>
            <person name="Stapleton M."/>
            <person name="Carlson J.W."/>
            <person name="Brokstein P."/>
            <person name="Yu C."/>
            <person name="Champe M."/>
            <person name="George R.A."/>
            <person name="Guarin H."/>
            <person name="Kronmiller B."/>
            <person name="Pacleb J.M."/>
            <person name="Park S."/>
            <person name="Wan K.H."/>
            <person name="Rubin G.M."/>
            <person name="Celniker S.E."/>
        </authorList>
    </citation>
    <scope>NUCLEOTIDE SEQUENCE [LARGE SCALE MRNA]</scope>
    <source>
        <strain evidence="11">Berkeley</strain>
        <tissue evidence="11">Head</tissue>
    </source>
</reference>
<reference evidence="8" key="4">
    <citation type="journal article" date="2013" name="J. Cell Sci.">
        <title>Dmon1 controls recruitment of Rab7 to maturing endosomes in Drosophila.</title>
        <authorList>
            <person name="Yousefian J."/>
            <person name="Troost T."/>
            <person name="Grawe F."/>
            <person name="Sasamura T."/>
            <person name="Fortini M."/>
            <person name="Klein T."/>
        </authorList>
    </citation>
    <scope>FUNCTION</scope>
    <scope>SUBCELLULAR LOCATION</scope>
</reference>
<reference evidence="8" key="5">
    <citation type="journal article" date="2016" name="Mol. Biol. Cell">
        <title>The Ccz1-Mon1-Rab7 module and Rab5 control distinct steps of autophagy.</title>
        <authorList>
            <person name="Hegedus K."/>
            <person name="Takats S."/>
            <person name="Boda A."/>
            <person name="Jipa A."/>
            <person name="Nagy P."/>
            <person name="Varga K."/>
            <person name="Kovacs A.L."/>
            <person name="Juhasz G."/>
        </authorList>
    </citation>
    <scope>FUNCTION</scope>
    <scope>SUBUNIT</scope>
    <scope>DISRUPTION PHENOTYPE</scope>
</reference>
<reference evidence="8" key="6">
    <citation type="journal article" date="2020" name="Elife">
        <title>A conserved and regulated mechanism drives endosomal Rab transition.</title>
        <authorList>
            <person name="Langemeyer L."/>
            <person name="Borchers A.C."/>
            <person name="Herrmann E."/>
            <person name="Fuellbrunn N."/>
            <person name="Han Y."/>
            <person name="Perz A."/>
            <person name="Auffarth K."/>
            <person name="Kuemmel D."/>
            <person name="Ungermann C."/>
        </authorList>
    </citation>
    <scope>FUNCTION</scope>
    <scope>ACTIVITY REGULATION</scope>
</reference>
<reference evidence="8" key="7">
    <citation type="journal article" date="2020" name="J. Cell Sci.">
        <title>A trimeric metazoan Rab7 GEF complex is crucial for endocytosis and scavenger function.</title>
        <authorList>
            <person name="Dehnen L."/>
            <person name="Janz M."/>
            <person name="Verma J.K."/>
            <person name="Psathaki O.E."/>
            <person name="Langemeyer L."/>
            <person name="Froehlich F."/>
            <person name="Heinisch J.J."/>
            <person name="Meyer H."/>
            <person name="Ungermann C."/>
            <person name="Paululat A."/>
        </authorList>
    </citation>
    <scope>IDENTIFICATION IN THE MON1-CCZ1 GUANYL-NUCLEOTIDE EXCHANGE FACTOR COMPLEX</scope>
    <scope>INTERACTION WITH BULLI AND MON1</scope>
</reference>
<reference evidence="8" key="8">
    <citation type="journal article" date="2023" name="Proc. Natl. Acad. Sci. U.S.A.">
        <title>Regulatory sites in the Mon1-Ccz1 complex control Rab5 to Rab7 transition and endosome maturation.</title>
        <authorList>
            <person name="Borchers A.C."/>
            <person name="Janz M."/>
            <person name="Schaefer J.H."/>
            <person name="Moeller A."/>
            <person name="Kuemmel D."/>
            <person name="Paululat A."/>
            <person name="Ungermann C."/>
            <person name="Langemeyer L."/>
        </authorList>
    </citation>
    <scope>FUNCTION</scope>
    <scope>SUBUNIT</scope>
    <scope>ACTIVITY REGULATION</scope>
</reference>
<reference evidence="13" key="9">
    <citation type="journal article" date="2023" name="Proc. Natl. Acad. Sci. U.S.A.">
        <title>Structure of the metazoan Rab7 GEF complex Mon1-Ccz1-Bulli.</title>
        <authorList>
            <person name="Herrmann E."/>
            <person name="Schaefer J.H."/>
            <person name="Wilmes S."/>
            <person name="Ungermann C."/>
            <person name="Moeller A."/>
            <person name="Kuemmel D."/>
        </authorList>
    </citation>
    <scope>STRUCTURE BY ELECTRON MICROSCOPY (3.2 ANGSTROMS)</scope>
    <scope>SUBUNIT</scope>
</reference>
<accession>Q9VZL5</accession>
<accession>Q8SYB1</accession>
<sequence>MAKLLQRVEITLRSFYIFNSTFGQVEGEEHKKVLFYHPNDIELNTKIKDVGLSEAIIRFTGTFTSEDDCQALHTQKTTQLFYQPEPGYWLVLVLNVPKEVRLKEGVEVADYRGAEISDRIYRAILRQCYQMFRFQNGCFSSCGSEEPNPDKRRELLCQKLLQFYDQHLTNLRDPAQCDIIDMLHSIQYLPLDKTLFLRAQNFGTLCETFPDIKESIMLYQEQVLCGGKLSPEDLHCVHSYVVQHVLKVEASSSTIAVSPSLKRSISECQVGGFVRSRQKVAGDEHDAVNEEDHPMKVYVTLDKEAKPYYLLIYRALHITLCLFLNADQVAPKQDLYDDLHAYMAPQLTSLARDISSELTKEAVGAAGQDNSSGNSETAPKYLFINEQSLQHHTNFQRHLPQGLPRNVLSIIADLANGSGKAEMESAPAEEVQVKTTNDYWIVKRRCNYRQYYVILCNSKATLLDVTQEARRIFEQELTDDVFFDK</sequence>